<evidence type="ECO:0000250" key="1"/>
<evidence type="ECO:0000250" key="2">
    <source>
        <dbReference type="UniProtKB" id="Q9JI60"/>
    </source>
</evidence>
<evidence type="ECO:0000255" key="3"/>
<evidence type="ECO:0000255" key="4">
    <source>
        <dbReference type="PROSITE-ProRule" id="PRU01283"/>
    </source>
</evidence>
<evidence type="ECO:0000269" key="5">
    <source>
    </source>
</evidence>
<evidence type="ECO:0000269" key="6">
    <source>
    </source>
</evidence>
<evidence type="ECO:0000305" key="7"/>
<evidence type="ECO:0000305" key="8">
    <source>
    </source>
</evidence>
<evidence type="ECO:0000305" key="9">
    <source>
    </source>
</evidence>
<gene>
    <name type="primary">LRAT</name>
</gene>
<reference key="1">
    <citation type="journal article" date="2001" name="Invest. Ophthalmol. Vis. Sci.">
        <title>Genomic organization and mutation analysis of the gene encoding lecithin retinol acyltransferase in human retinal pigment epithelium.</title>
        <authorList>
            <person name="Ruiz A."/>
            <person name="Kuehn M.H."/>
            <person name="Andorf J.L."/>
            <person name="Stone E."/>
            <person name="Hageman G.S."/>
            <person name="Bok D."/>
        </authorList>
    </citation>
    <scope>NUCLEOTIDE SEQUENCE [MRNA]</scope>
</reference>
<reference key="2">
    <citation type="journal article" date="1999" name="J. Biol. Chem.">
        <title>Molecular and biochemical characterization of lecithin retinol acyltransferase.</title>
        <authorList>
            <person name="Ruiz A."/>
            <person name="Winston A."/>
            <person name="Lim Y.-H."/>
            <person name="Gilbert B.A."/>
            <person name="Rando R.R."/>
            <person name="Bok D."/>
        </authorList>
    </citation>
    <scope>PROTEIN SEQUENCE OF 1-24 AND 57-69</scope>
    <scope>FUNCTION</scope>
    <scope>ACTIVITY REGULATION</scope>
    <scope>CATALYTIC ACTIVITY</scope>
</reference>
<reference key="3">
    <citation type="journal article" date="1989" name="J. Biol. Chem.">
        <title>Lecithin:retinol acyltransferase in retinal pigment epithelial microsomes.</title>
        <authorList>
            <person name="Saari J.C."/>
            <person name="Bredberg D.L."/>
        </authorList>
    </citation>
    <scope>FUNCTION</scope>
    <scope>CATALYTIC ACTIVITY</scope>
</reference>
<sequence>MKNPMLEAVSLVLEKLLFISYFKFFSSGAPGQDKAGNTLYEISSFLRGDVLEVPRTHLTHYGIYLGDNRVAHMMPDILLALTDDKGRTQKVVSNKRLILGVIGRVASIRVDTVEDFAYGAEILVNHLDRSLKKKALLNEEVAQRAEKLLGITPYSLLWNNCEHFVTYCRYGTPISPQADKFCENVKIIIRDQRSVLASAVLGLASIFCLGLTSYTTLPAIFIPFLLWMAG</sequence>
<proteinExistence type="evidence at protein level"/>
<feature type="chain" id="PRO_0000152477" description="Lecithin retinol acyltransferase">
    <location>
        <begin position="1"/>
        <end position="230"/>
    </location>
</feature>
<feature type="topological domain" description="Cytoplasmic" evidence="1">
    <location>
        <begin position="1"/>
        <end position="194"/>
    </location>
</feature>
<feature type="transmembrane region" description="Helical" evidence="3">
    <location>
        <begin position="195"/>
        <end position="215"/>
    </location>
</feature>
<feature type="topological domain" description="Lumenal" evidence="1">
    <location>
        <begin position="216"/>
        <end position="230"/>
    </location>
</feature>
<feature type="domain" description="LRAT" evidence="4">
    <location>
        <begin position="50"/>
        <end position="177"/>
    </location>
</feature>
<feature type="active site" evidence="4">
    <location>
        <position position="60"/>
    </location>
</feature>
<feature type="active site" evidence="4">
    <location>
        <position position="72"/>
    </location>
</feature>
<feature type="active site" description="Acyl-thioester intermediate" evidence="4">
    <location>
        <position position="161"/>
    </location>
</feature>
<accession>Q9BGL2</accession>
<keyword id="KW-0012">Acyltransferase</keyword>
<keyword id="KW-0963">Cytoplasm</keyword>
<keyword id="KW-0903">Direct protein sequencing</keyword>
<keyword id="KW-0256">Endoplasmic reticulum</keyword>
<keyword id="KW-0967">Endosome</keyword>
<keyword id="KW-0443">Lipid metabolism</keyword>
<keyword id="KW-0472">Membrane</keyword>
<keyword id="KW-1185">Reference proteome</keyword>
<keyword id="KW-0716">Sensory transduction</keyword>
<keyword id="KW-0808">Transferase</keyword>
<keyword id="KW-0812">Transmembrane</keyword>
<keyword id="KW-1133">Transmembrane helix</keyword>
<keyword id="KW-0844">Vision</keyword>
<comment type="function">
    <text evidence="2 5 6 9">Transfers the acyl group from the sn-1 position of phosphatidylcholine to all-trans retinol, producing all-trans retinyl esters (PubMed:2722792, PubMed:9920938). Retinyl esters are storage forms of vitamin A (Probable). LRAT plays a critical role in vision (Probable). It provides the all-trans retinyl ester substrates for the isomerohydrolase which processes the esters into 11-cis-retinol in the retinal pigment epithelium; due to a membrane-associated alcohol dehydrogenase, 11 cis-retinol is oxidized and converted into 11-cis-retinaldehyde which is the chromophore for rhodopsin and the cone photopigments (Probable). Required for the survival of cone photoreceptors and correct rod photoreceptor cell morphology (By similarity).</text>
</comment>
<comment type="catalytic activity">
    <reaction evidence="5">
        <text>all-trans-retinol--[retinol-binding protein] + a 1,2-diacyl-sn-glycero-3-phosphocholine = apo--[retinol-binding protein] + an all-trans-retinyl ester + a 2-acyl-sn-glycero-3-phosphocholine</text>
        <dbReference type="Rhea" id="RHEA:17469"/>
        <dbReference type="Rhea" id="RHEA-COMP:14426"/>
        <dbReference type="Rhea" id="RHEA-COMP:14428"/>
        <dbReference type="ChEBI" id="CHEBI:17336"/>
        <dbReference type="ChEBI" id="CHEBI:57643"/>
        <dbReference type="ChEBI" id="CHEBI:57875"/>
        <dbReference type="ChEBI" id="CHEBI:63410"/>
        <dbReference type="ChEBI" id="CHEBI:83228"/>
        <dbReference type="EC" id="2.3.1.135"/>
    </reaction>
    <physiologicalReaction direction="left-to-right" evidence="8">
        <dbReference type="Rhea" id="RHEA:17470"/>
    </physiologicalReaction>
</comment>
<comment type="catalytic activity">
    <reaction evidence="6">
        <text>1,2-dihexadecanoyl-sn-glycero-3-phosphocholine + all-trans-retinol = all-trans-retinyl hexadecanoate + 2-hexadecanoyl-sn-glycero-3-phosphocholine</text>
        <dbReference type="Rhea" id="RHEA:43904"/>
        <dbReference type="ChEBI" id="CHEBI:17336"/>
        <dbReference type="ChEBI" id="CHEBI:17616"/>
        <dbReference type="ChEBI" id="CHEBI:72999"/>
        <dbReference type="ChEBI" id="CHEBI:76078"/>
    </reaction>
    <physiologicalReaction direction="left-to-right" evidence="9">
        <dbReference type="Rhea" id="RHEA:43905"/>
    </physiologicalReaction>
</comment>
<comment type="catalytic activity">
    <reaction evidence="2">
        <text>1,2-diheptanoyl-sn-glycero-3-phosphocholine + all-trans-retinol--[retinol-binding protein] = all-trans-retinyl heptanoate + 2-heptanoyl-sn-glycero-3-phosphocholine + apo--[retinol-binding protein]</text>
        <dbReference type="Rhea" id="RHEA:55320"/>
        <dbReference type="Rhea" id="RHEA-COMP:14426"/>
        <dbReference type="Rhea" id="RHEA-COMP:14428"/>
        <dbReference type="ChEBI" id="CHEBI:17336"/>
        <dbReference type="ChEBI" id="CHEBI:83228"/>
        <dbReference type="ChEBI" id="CHEBI:138195"/>
        <dbReference type="ChEBI" id="CHEBI:138266"/>
        <dbReference type="ChEBI" id="CHEBI:138724"/>
    </reaction>
    <physiologicalReaction direction="left-to-right" evidence="2">
        <dbReference type="Rhea" id="RHEA:55321"/>
    </physiologicalReaction>
</comment>
<comment type="catalytic activity">
    <reaction evidence="2">
        <text>1,2-dioctanoyl-sn-glycero-3-phosphocholine + all-trans-retinol--[retinol-binding protein] = 2-octanoyl-sn-glycero-3-phosphocholine + all-trans-retinyl octanoate + apo--[retinol-binding protein]</text>
        <dbReference type="Rhea" id="RHEA:56240"/>
        <dbReference type="Rhea" id="RHEA-COMP:14426"/>
        <dbReference type="Rhea" id="RHEA-COMP:14428"/>
        <dbReference type="ChEBI" id="CHEBI:17336"/>
        <dbReference type="ChEBI" id="CHEBI:78228"/>
        <dbReference type="ChEBI" id="CHEBI:83228"/>
        <dbReference type="ChEBI" id="CHEBI:140082"/>
        <dbReference type="ChEBI" id="CHEBI:140084"/>
    </reaction>
    <physiologicalReaction direction="left-to-right" evidence="2">
        <dbReference type="Rhea" id="RHEA:56241"/>
    </physiologicalReaction>
</comment>
<comment type="catalytic activity">
    <reaction evidence="2">
        <text>all-trans-retinol--[retinol-binding protein] + 1,2-dihexadecanoyl-sn-glycero-3-phosphocholine = apo--[retinol-binding protein] + all-trans-retinyl hexadecanoate + 2-hexadecanoyl-sn-glycero-3-phosphocholine</text>
        <dbReference type="Rhea" id="RHEA:56244"/>
        <dbReference type="Rhea" id="RHEA-COMP:14426"/>
        <dbReference type="Rhea" id="RHEA-COMP:14428"/>
        <dbReference type="ChEBI" id="CHEBI:17336"/>
        <dbReference type="ChEBI" id="CHEBI:17616"/>
        <dbReference type="ChEBI" id="CHEBI:72999"/>
        <dbReference type="ChEBI" id="CHEBI:76078"/>
        <dbReference type="ChEBI" id="CHEBI:83228"/>
    </reaction>
    <physiologicalReaction direction="left-to-right" evidence="2">
        <dbReference type="Rhea" id="RHEA:56245"/>
    </physiologicalReaction>
</comment>
<comment type="catalytic activity">
    <reaction evidence="2">
        <text>1,2-didodecanoyl-sn-glycero-3-phosphocholine + all-trans-retinol--[retinol-binding protein] = 2-dodecanoyl-sn-glycero-3-phosphocholine + all-trans-retinyl dodecanoate + apo--[retinol-binding protein]</text>
        <dbReference type="Rhea" id="RHEA:56248"/>
        <dbReference type="Rhea" id="RHEA-COMP:14426"/>
        <dbReference type="Rhea" id="RHEA-COMP:14428"/>
        <dbReference type="ChEBI" id="CHEBI:17336"/>
        <dbReference type="ChEBI" id="CHEBI:65211"/>
        <dbReference type="ChEBI" id="CHEBI:83228"/>
        <dbReference type="ChEBI" id="CHEBI:140088"/>
        <dbReference type="ChEBI" id="CHEBI:140089"/>
    </reaction>
    <physiologicalReaction direction="left-to-right" evidence="2">
        <dbReference type="Rhea" id="RHEA:56249"/>
    </physiologicalReaction>
</comment>
<comment type="activity regulation">
    <text evidence="6">Inhibited by all-trans-retinyl alpha-bromoacetate and N-boc-L-biocytinyl-11-aminoundecane chloro-methyl ketone (BACMK).</text>
</comment>
<comment type="pathway">
    <text>Cofactor metabolism; retinol metabolism.</text>
</comment>
<comment type="subcellular location">
    <subcellularLocation>
        <location evidence="1">Endoplasmic reticulum membrane</location>
        <topology evidence="1">Single-pass membrane protein</topology>
    </subcellularLocation>
    <subcellularLocation>
        <location evidence="1">Rough endoplasmic reticulum</location>
    </subcellularLocation>
    <subcellularLocation>
        <location evidence="1">Endosome</location>
        <location evidence="1">Multivesicular body</location>
    </subcellularLocation>
    <subcellularLocation>
        <location evidence="1">Cytoplasm</location>
        <location evidence="1">Perinuclear region</location>
    </subcellularLocation>
    <text evidence="1">Present in the rough endoplasmic reticulum and multivesicular body in hepatic stellate cells. Present in the rough endoplasmic reticulum and perinuclear region in endothelial cells (By similarity).</text>
</comment>
<comment type="induction">
    <text evidence="1">LRAT activity is up-regulated by dietary vitamin A. Under conditions of vitamin A depletion, LRAT expression in the liver is induced by retinoic acid (By similarity).</text>
</comment>
<comment type="similarity">
    <text evidence="7">Belongs to the H-rev107 family.</text>
</comment>
<protein>
    <recommendedName>
        <fullName evidence="7">Lecithin retinol acyltransferase</fullName>
        <ecNumber evidence="5">2.3.1.135</ecNumber>
    </recommendedName>
    <alternativeName>
        <fullName>Phosphatidylcholine--retinol O-acyltransferase</fullName>
    </alternativeName>
</protein>
<name>LRAT_BOVIN</name>
<dbReference type="EC" id="2.3.1.135" evidence="5"/>
<dbReference type="EMBL" id="AF275344">
    <property type="protein sequence ID" value="AAK08701.1"/>
    <property type="molecule type" value="mRNA"/>
</dbReference>
<dbReference type="RefSeq" id="NP_803469.1">
    <property type="nucleotide sequence ID" value="NM_177503.2"/>
</dbReference>
<dbReference type="SMR" id="Q9BGL2"/>
<dbReference type="FunCoup" id="Q9BGL2">
    <property type="interactions" value="83"/>
</dbReference>
<dbReference type="STRING" id="9913.ENSBTAP00000022813"/>
<dbReference type="ChEMBL" id="CHEMBL4523439"/>
<dbReference type="SwissLipids" id="SLP:000001895"/>
<dbReference type="PaxDb" id="9913-ENSBTAP00000046443"/>
<dbReference type="GeneID" id="281285"/>
<dbReference type="KEGG" id="bta:281285"/>
<dbReference type="CTD" id="9227"/>
<dbReference type="eggNOG" id="ENOG502QWSA">
    <property type="taxonomic scope" value="Eukaryota"/>
</dbReference>
<dbReference type="InParanoid" id="Q9BGL2"/>
<dbReference type="OrthoDB" id="421951at2759"/>
<dbReference type="BRENDA" id="2.3.1.135">
    <property type="organism ID" value="908"/>
</dbReference>
<dbReference type="SABIO-RK" id="Q9BGL2"/>
<dbReference type="UniPathway" id="UPA00912"/>
<dbReference type="Proteomes" id="UP000009136">
    <property type="component" value="Unplaced"/>
</dbReference>
<dbReference type="GO" id="GO:0005783">
    <property type="term" value="C:endoplasmic reticulum"/>
    <property type="evidence" value="ECO:0000250"/>
    <property type="project" value="UniProtKB"/>
</dbReference>
<dbReference type="GO" id="GO:0005789">
    <property type="term" value="C:endoplasmic reticulum membrane"/>
    <property type="evidence" value="ECO:0007669"/>
    <property type="project" value="UniProtKB-SubCell"/>
</dbReference>
<dbReference type="GO" id="GO:0005771">
    <property type="term" value="C:multivesicular body"/>
    <property type="evidence" value="ECO:0007669"/>
    <property type="project" value="UniProtKB-SubCell"/>
</dbReference>
<dbReference type="GO" id="GO:0048471">
    <property type="term" value="C:perinuclear region of cytoplasm"/>
    <property type="evidence" value="ECO:0007669"/>
    <property type="project" value="UniProtKB-SubCell"/>
</dbReference>
<dbReference type="GO" id="GO:0005791">
    <property type="term" value="C:rough endoplasmic reticulum"/>
    <property type="evidence" value="ECO:0000318"/>
    <property type="project" value="GO_Central"/>
</dbReference>
<dbReference type="GO" id="GO:0047173">
    <property type="term" value="F:phosphatidylcholine-retinol O-acyltransferase activity"/>
    <property type="evidence" value="ECO:0000250"/>
    <property type="project" value="UniProtKB"/>
</dbReference>
<dbReference type="GO" id="GO:0042572">
    <property type="term" value="P:retinol metabolic process"/>
    <property type="evidence" value="ECO:0000250"/>
    <property type="project" value="UniProtKB"/>
</dbReference>
<dbReference type="GO" id="GO:0007601">
    <property type="term" value="P:visual perception"/>
    <property type="evidence" value="ECO:0007669"/>
    <property type="project" value="UniProtKB-KW"/>
</dbReference>
<dbReference type="GO" id="GO:0006776">
    <property type="term" value="P:vitamin A metabolic process"/>
    <property type="evidence" value="ECO:0000250"/>
    <property type="project" value="UniProtKB"/>
</dbReference>
<dbReference type="FunFam" id="3.90.1720.10:FF:000006">
    <property type="entry name" value="Lecithin retinol acyltransferase"/>
    <property type="match status" value="1"/>
</dbReference>
<dbReference type="Gene3D" id="3.90.1720.10">
    <property type="entry name" value="endopeptidase domain like (from Nostoc punctiforme)"/>
    <property type="match status" value="1"/>
</dbReference>
<dbReference type="InterPro" id="IPR042288">
    <property type="entry name" value="LRAT"/>
</dbReference>
<dbReference type="InterPro" id="IPR007053">
    <property type="entry name" value="LRAT_dom"/>
</dbReference>
<dbReference type="PANTHER" id="PTHR46678">
    <property type="entry name" value="LECITHIN RETINOL ACYLTRANSFERASE"/>
    <property type="match status" value="1"/>
</dbReference>
<dbReference type="PANTHER" id="PTHR46678:SF1">
    <property type="entry name" value="LECITHIN RETINOL ACYLTRANSFERASE"/>
    <property type="match status" value="1"/>
</dbReference>
<dbReference type="Pfam" id="PF04970">
    <property type="entry name" value="LRAT"/>
    <property type="match status" value="1"/>
</dbReference>
<dbReference type="PROSITE" id="PS51934">
    <property type="entry name" value="LRAT"/>
    <property type="match status" value="1"/>
</dbReference>
<organism>
    <name type="scientific">Bos taurus</name>
    <name type="common">Bovine</name>
    <dbReference type="NCBI Taxonomy" id="9913"/>
    <lineage>
        <taxon>Eukaryota</taxon>
        <taxon>Metazoa</taxon>
        <taxon>Chordata</taxon>
        <taxon>Craniata</taxon>
        <taxon>Vertebrata</taxon>
        <taxon>Euteleostomi</taxon>
        <taxon>Mammalia</taxon>
        <taxon>Eutheria</taxon>
        <taxon>Laurasiatheria</taxon>
        <taxon>Artiodactyla</taxon>
        <taxon>Ruminantia</taxon>
        <taxon>Pecora</taxon>
        <taxon>Bovidae</taxon>
        <taxon>Bovinae</taxon>
        <taxon>Bos</taxon>
    </lineage>
</organism>